<organism>
    <name type="scientific">Zea mays</name>
    <name type="common">Maize</name>
    <dbReference type="NCBI Taxonomy" id="4577"/>
    <lineage>
        <taxon>Eukaryota</taxon>
        <taxon>Viridiplantae</taxon>
        <taxon>Streptophyta</taxon>
        <taxon>Embryophyta</taxon>
        <taxon>Tracheophyta</taxon>
        <taxon>Spermatophyta</taxon>
        <taxon>Magnoliopsida</taxon>
        <taxon>Liliopsida</taxon>
        <taxon>Poales</taxon>
        <taxon>Poaceae</taxon>
        <taxon>PACMAD clade</taxon>
        <taxon>Panicoideae</taxon>
        <taxon>Andropogonodae</taxon>
        <taxon>Andropogoneae</taxon>
        <taxon>Tripsacinae</taxon>
        <taxon>Zea</taxon>
    </lineage>
</organism>
<sequence>GLAYEYLEQDLGKKSELLLAANPVHKVYDFVXGMKPEVAK</sequence>
<keyword id="KW-0903">Direct protein sequencing</keyword>
<keyword id="KW-1185">Reference proteome</keyword>
<reference key="1">
    <citation type="journal article" date="1996" name="Theor. Appl. Genet.">
        <title>The maize two dimensional gel protein database: towards an integrated genome analysis program.</title>
        <authorList>
            <person name="Touzet P."/>
            <person name="Riccardi F."/>
            <person name="Morin C."/>
            <person name="Damerval C."/>
            <person name="Huet J.-C."/>
            <person name="Pernollet J.-C."/>
            <person name="Zivy M."/>
            <person name="de Vienne D."/>
        </authorList>
        <dbReference type="AGRICOLA" id="IND20551642"/>
    </citation>
    <scope>PROTEIN SEQUENCE</scope>
    <source>
        <tissue>Coleoptile</tissue>
    </source>
</reference>
<comment type="miscellaneous">
    <text>On the 2D-gel the determined pI of this unknown protein is: 6.2, its MW is: 27.1 kDa.</text>
</comment>
<comment type="similarity">
    <text evidence="1">Belongs to the GST superfamily. HSP26 family.</text>
</comment>
<comment type="caution">
    <text evidence="1">The order of the peptides shown is unknown.</text>
</comment>
<accession>P80617</accession>
<proteinExistence type="evidence at protein level"/>
<protein>
    <recommendedName>
        <fullName>Unknown protein from spot 207 of 2D-PAGE of etiolated coleoptile</fullName>
    </recommendedName>
</protein>
<dbReference type="MaizeGDB" id="123940"/>
<dbReference type="InParanoid" id="P80617"/>
<dbReference type="Proteomes" id="UP000007305">
    <property type="component" value="Unplaced"/>
</dbReference>
<dbReference type="Gene3D" id="3.40.30.10">
    <property type="entry name" value="Glutaredoxin"/>
    <property type="match status" value="1"/>
</dbReference>
<name>UC11_MAIZE</name>
<evidence type="ECO:0000305" key="1"/>
<feature type="chain" id="PRO_0000055508" description="Unknown protein from spot 207 of 2D-PAGE of etiolated coleoptile">
    <location>
        <begin position="1" status="less than"/>
        <end position="40" status="greater than"/>
    </location>
</feature>
<feature type="non-consecutive residues" evidence="1">
    <location>
        <begin position="13"/>
        <end position="14"/>
    </location>
</feature>
<feature type="non-consecutive residues" evidence="1">
    <location>
        <begin position="26"/>
        <end position="27"/>
    </location>
</feature>
<feature type="non-consecutive residues" evidence="1">
    <location>
        <begin position="35"/>
        <end position="36"/>
    </location>
</feature>
<feature type="non-terminal residue">
    <location>
        <position position="1"/>
    </location>
</feature>
<feature type="non-terminal residue">
    <location>
        <position position="40"/>
    </location>
</feature>